<accession>P13698</accession>
<feature type="signal peptide">
    <location>
        <begin position="1"/>
        <end position="22"/>
    </location>
</feature>
<feature type="propeptide" id="PRO_0000023364" description="Removed in mature form">
    <location>
        <begin position="23"/>
        <end position="91"/>
    </location>
</feature>
<feature type="chain" id="PRO_0000023365" description="Platelet-derived growth factor subunit A">
    <location>
        <begin position="92"/>
        <end position="226"/>
    </location>
</feature>
<feature type="glycosylation site" description="N-linked (GlcNAc...) asparagine" evidence="2">
    <location>
        <position position="139"/>
    </location>
</feature>
<feature type="disulfide bond" evidence="1">
    <location>
        <begin position="101"/>
        <end position="145"/>
    </location>
</feature>
<feature type="disulfide bond" description="Interchain" evidence="1">
    <location>
        <position position="128"/>
    </location>
</feature>
<feature type="disulfide bond" evidence="1">
    <location>
        <begin position="134"/>
        <end position="182"/>
    </location>
</feature>
<feature type="disulfide bond" description="Interchain" evidence="1">
    <location>
        <position position="137"/>
    </location>
</feature>
<feature type="disulfide bond" evidence="1">
    <location>
        <begin position="138"/>
        <end position="184"/>
    </location>
</feature>
<feature type="splice variant" id="VSP_004611" description="In isoform Short." evidence="3">
    <original>GFF</original>
    <variation>DVR</variation>
    <location>
        <begin position="198"/>
        <end position="200"/>
    </location>
</feature>
<feature type="splice variant" id="VSP_004612" description="In isoform Short." evidence="3">
    <location>
        <begin position="201"/>
        <end position="226"/>
    </location>
</feature>
<feature type="sequence conflict" description="In Ref. 2; CAA35583." evidence="3" ref="2">
    <location>
        <begin position="199"/>
        <end position="209"/>
    </location>
</feature>
<feature type="sequence conflict" description="In Ref. 2; CAA35583." evidence="3" ref="2">
    <original>Q</original>
    <variation>R</variation>
    <location>
        <position position="218"/>
    </location>
</feature>
<organism>
    <name type="scientific">Xenopus laevis</name>
    <name type="common">African clawed frog</name>
    <dbReference type="NCBI Taxonomy" id="8355"/>
    <lineage>
        <taxon>Eukaryota</taxon>
        <taxon>Metazoa</taxon>
        <taxon>Chordata</taxon>
        <taxon>Craniata</taxon>
        <taxon>Vertebrata</taxon>
        <taxon>Euteleostomi</taxon>
        <taxon>Amphibia</taxon>
        <taxon>Batrachia</taxon>
        <taxon>Anura</taxon>
        <taxon>Pipoidea</taxon>
        <taxon>Pipidae</taxon>
        <taxon>Xenopodinae</taxon>
        <taxon>Xenopus</taxon>
        <taxon>Xenopus</taxon>
    </lineage>
</organism>
<dbReference type="EMBL" id="M23237">
    <property type="protein sequence ID" value="AAA49927.1"/>
    <property type="molecule type" value="mRNA"/>
</dbReference>
<dbReference type="EMBL" id="M23238">
    <property type="protein sequence ID" value="AAA49928.1"/>
    <property type="molecule type" value="mRNA"/>
</dbReference>
<dbReference type="EMBL" id="X17545">
    <property type="protein sequence ID" value="CAA35583.1"/>
    <property type="molecule type" value="mRNA"/>
</dbReference>
<dbReference type="PIR" id="I51550">
    <property type="entry name" value="I51550"/>
</dbReference>
<dbReference type="PIR" id="I51551">
    <property type="entry name" value="I51551"/>
</dbReference>
<dbReference type="PIR" id="S08220">
    <property type="entry name" value="S08220"/>
</dbReference>
<dbReference type="RefSeq" id="NP_001081304.1">
    <molecule id="P13698-1"/>
    <property type="nucleotide sequence ID" value="NM_001087835.1"/>
</dbReference>
<dbReference type="RefSeq" id="XP_018092793.1">
    <property type="nucleotide sequence ID" value="XM_018237304.1"/>
</dbReference>
<dbReference type="RefSeq" id="XP_018092794.1">
    <molecule id="P13698-2"/>
    <property type="nucleotide sequence ID" value="XM_018237305.1"/>
</dbReference>
<dbReference type="SMR" id="P13698"/>
<dbReference type="GlyCosmos" id="P13698">
    <property type="glycosylation" value="1 site, No reported glycans"/>
</dbReference>
<dbReference type="GeneID" id="397765"/>
<dbReference type="KEGG" id="xla:397765"/>
<dbReference type="AGR" id="Xenbase:XB-GENE-484499"/>
<dbReference type="CTD" id="397765"/>
<dbReference type="Xenbase" id="XB-GENE-484499">
    <property type="gene designation" value="pdgfa.S"/>
</dbReference>
<dbReference type="OMA" id="THTHFPP"/>
<dbReference type="OrthoDB" id="8878063at2759"/>
<dbReference type="Proteomes" id="UP000186698">
    <property type="component" value="Chromosome 9_10S"/>
</dbReference>
<dbReference type="Bgee" id="397765">
    <property type="expression patterns" value="Expressed in internal ear and 18 other cell types or tissues"/>
</dbReference>
<dbReference type="GO" id="GO:0005615">
    <property type="term" value="C:extracellular space"/>
    <property type="evidence" value="ECO:0000318"/>
    <property type="project" value="GO_Central"/>
</dbReference>
<dbReference type="GO" id="GO:0016020">
    <property type="term" value="C:membrane"/>
    <property type="evidence" value="ECO:0007669"/>
    <property type="project" value="InterPro"/>
</dbReference>
<dbReference type="GO" id="GO:0008083">
    <property type="term" value="F:growth factor activity"/>
    <property type="evidence" value="ECO:0007669"/>
    <property type="project" value="UniProtKB-KW"/>
</dbReference>
<dbReference type="GO" id="GO:0005161">
    <property type="term" value="F:platelet-derived growth factor receptor binding"/>
    <property type="evidence" value="ECO:0000318"/>
    <property type="project" value="GO_Central"/>
</dbReference>
<dbReference type="GO" id="GO:0001525">
    <property type="term" value="P:angiogenesis"/>
    <property type="evidence" value="ECO:0000318"/>
    <property type="project" value="GO_Central"/>
</dbReference>
<dbReference type="GO" id="GO:0048008">
    <property type="term" value="P:platelet-derived growth factor receptor signaling pathway"/>
    <property type="evidence" value="ECO:0000318"/>
    <property type="project" value="GO_Central"/>
</dbReference>
<dbReference type="GO" id="GO:0051781">
    <property type="term" value="P:positive regulation of cell division"/>
    <property type="evidence" value="ECO:0007669"/>
    <property type="project" value="UniProtKB-KW"/>
</dbReference>
<dbReference type="GO" id="GO:0030335">
    <property type="term" value="P:positive regulation of cell migration"/>
    <property type="evidence" value="ECO:0000318"/>
    <property type="project" value="GO_Central"/>
</dbReference>
<dbReference type="GO" id="GO:0008284">
    <property type="term" value="P:positive regulation of cell population proliferation"/>
    <property type="evidence" value="ECO:0000318"/>
    <property type="project" value="GO_Central"/>
</dbReference>
<dbReference type="GO" id="GO:0070374">
    <property type="term" value="P:positive regulation of ERK1 and ERK2 cascade"/>
    <property type="evidence" value="ECO:0000318"/>
    <property type="project" value="GO_Central"/>
</dbReference>
<dbReference type="GO" id="GO:0051897">
    <property type="term" value="P:positive regulation of phosphatidylinositol 3-kinase/protein kinase B signal transduction"/>
    <property type="evidence" value="ECO:0000318"/>
    <property type="project" value="GO_Central"/>
</dbReference>
<dbReference type="CDD" id="cd00135">
    <property type="entry name" value="PDGF"/>
    <property type="match status" value="1"/>
</dbReference>
<dbReference type="FunFam" id="2.10.90.10:FF:000017">
    <property type="entry name" value="Platelet derived growth factor subunit A"/>
    <property type="match status" value="1"/>
</dbReference>
<dbReference type="Gene3D" id="2.10.90.10">
    <property type="entry name" value="Cystine-knot cytokines"/>
    <property type="match status" value="1"/>
</dbReference>
<dbReference type="InterPro" id="IPR029034">
    <property type="entry name" value="Cystine-knot_cytokine"/>
</dbReference>
<dbReference type="InterPro" id="IPR023581">
    <property type="entry name" value="PD_growth_factor_CS"/>
</dbReference>
<dbReference type="InterPro" id="IPR000072">
    <property type="entry name" value="PDGF/VEGF_dom"/>
</dbReference>
<dbReference type="InterPro" id="IPR006782">
    <property type="entry name" value="PDGF_N"/>
</dbReference>
<dbReference type="PANTHER" id="PTHR11633">
    <property type="entry name" value="PLATELET-DERIVED GROWTH FACTOR"/>
    <property type="match status" value="1"/>
</dbReference>
<dbReference type="PANTHER" id="PTHR11633:SF3">
    <property type="entry name" value="PLATELET-DERIVED GROWTH FACTOR SUBUNIT A"/>
    <property type="match status" value="1"/>
</dbReference>
<dbReference type="Pfam" id="PF00341">
    <property type="entry name" value="PDGF"/>
    <property type="match status" value="1"/>
</dbReference>
<dbReference type="Pfam" id="PF04692">
    <property type="entry name" value="PDGF_N"/>
    <property type="match status" value="1"/>
</dbReference>
<dbReference type="SMART" id="SM00141">
    <property type="entry name" value="PDGF"/>
    <property type="match status" value="1"/>
</dbReference>
<dbReference type="SUPFAM" id="SSF57501">
    <property type="entry name" value="Cystine-knot cytokines"/>
    <property type="match status" value="1"/>
</dbReference>
<dbReference type="PROSITE" id="PS00249">
    <property type="entry name" value="PDGF_1"/>
    <property type="match status" value="1"/>
</dbReference>
<dbReference type="PROSITE" id="PS50278">
    <property type="entry name" value="PDGF_2"/>
    <property type="match status" value="1"/>
</dbReference>
<keyword id="KW-0025">Alternative splicing</keyword>
<keyword id="KW-0165">Cleavage on pair of basic residues</keyword>
<keyword id="KW-0217">Developmental protein</keyword>
<keyword id="KW-1015">Disulfide bond</keyword>
<keyword id="KW-0325">Glycoprotein</keyword>
<keyword id="KW-0339">Growth factor</keyword>
<keyword id="KW-0497">Mitogen</keyword>
<keyword id="KW-1185">Reference proteome</keyword>
<keyword id="KW-0964">Secreted</keyword>
<keyword id="KW-0732">Signal</keyword>
<sequence length="226" mass="25720">MRIWAWILLLSVCCSYLSPSLGEEAEIPQELIERLAHSEIRSISDLQRLLDIDSVGGGEDASAANIRSQKHDFHHNRLVPEKRSVPSRRKRSVEEAVPAICKTRTVIYEIPRSQIDPTSANFLIWPPCVEVKRCTGCCNTSSVKCQPSRIHHRSVKVAKVEYVRKKPKLKEVLVRLEEHLECTCTANSNSDYREEETGFFTSPALVLTGRTRETGKKQKRKKLKPT</sequence>
<gene>
    <name type="primary">pdgfa</name>
</gene>
<protein>
    <recommendedName>
        <fullName>Platelet-derived growth factor subunit A</fullName>
        <shortName>PDGF subunit A</shortName>
    </recommendedName>
    <alternativeName>
        <fullName>PDGF-1</fullName>
    </alternativeName>
    <alternativeName>
        <fullName>Platelet-derived growth factor A chain</fullName>
    </alternativeName>
    <alternativeName>
        <fullName>Platelet-derived growth factor alpha polypeptide</fullName>
    </alternativeName>
</protein>
<reference key="1">
    <citation type="journal article" date="1988" name="Science">
        <title>Platelet-derived growth factor A chain is maternally encoded in Xenopus embryos.</title>
        <authorList>
            <person name="Mercola M."/>
            <person name="Melton D.A."/>
            <person name="Stiles C.D."/>
        </authorList>
    </citation>
    <scope>NUCLEOTIDE SEQUENCE [MRNA]</scope>
    <source>
        <tissue>Oocyte</tissue>
    </source>
</reference>
<reference key="2">
    <citation type="journal article" date="1990" name="Nucleic Acids Res.">
        <title>Nucleotide sequence of a cDNA clone of Xenopus platelet-derived growth factor A-chain.</title>
        <authorList>
            <person name="Bejcek B.E."/>
            <person name="Li D.Y."/>
            <person name="Deuel T.F."/>
        </authorList>
    </citation>
    <scope>NUCLEOTIDE SEQUENCE [MRNA]</scope>
    <source>
        <tissue>Oocyte</tissue>
    </source>
</reference>
<name>PDGFA_XENLA</name>
<proteinExistence type="evidence at transcript level"/>
<evidence type="ECO:0000250" key="1"/>
<evidence type="ECO:0000255" key="2"/>
<evidence type="ECO:0000305" key="3"/>
<comment type="function">
    <text evidence="1">Growth factor that plays an essential role in the regulation of embryonic development, cell proliferation, cell migration, survival and chemotaxis. Potent mitogen for cells of mesenchymal origin. Signaling is modulated by the formation of heterodimers with PDGFB (By similarity).</text>
</comment>
<comment type="subunit">
    <text evidence="1">Homodimer; antiparallel disulfide-linked dimer. Heterodimer with PDGFB; antiparallel disulfide-linked dimer. The PDGFA homodimer interacts with PDGFRA homodimers, and with heterodimers formed by PDGFRA and PDGFRB. The heterodimer composed of PDGFA and PDGFB interacts with PDGFRA homodimers, and with heterodimers formed by PDGFRA and PDGFRB (By similarity).</text>
</comment>
<comment type="subcellular location">
    <subcellularLocation>
        <location evidence="1">Secreted</location>
    </subcellularLocation>
</comment>
<comment type="alternative products">
    <event type="alternative splicing"/>
    <isoform>
        <id>P13698-1</id>
        <name>Long</name>
        <sequence type="displayed"/>
    </isoform>
    <isoform>
        <id>P13698-2</id>
        <name>Short</name>
        <sequence type="described" ref="VSP_004611 VSP_004612"/>
    </isoform>
</comment>
<comment type="domain">
    <text>The long form contains a basic insert which acts as a cell retention signal.</text>
</comment>
<comment type="similarity">
    <text evidence="3">Belongs to the PDGF/VEGF growth factor family.</text>
</comment>